<sequence>MTTISRNTGTEISIMIKEKRLRLNMTQKELADAVGMSKNGDRTIRRWENGETCPSQLEISAILRFPEIAPFENRKTAKYKMIDLFAGIGGTRLGFHQTEKVKSVFSSEIDKFAIKTYKANFGDEPHGDITKIDEKDIPDHDILVGGFPCQAFSQAGKKLGFDDTRGTLFFEIARIIKEKRPKAFLLENVKNLKTHDKGRTFKTILNTLEELDYEVHTALFKARDFGLPQNRERIYIVGFDRKSISNYSDFQMPTPLQEKTRVGNILESVVDDKYTISDKLWDGHQRRKTENKKNGKGFGYTLFNQDSEYTNTLSARYYKDGSEILIEQKNKNPRKITPREAARLQGFPENFIIPVSDTQAYKEFGNSVAVPTIHAIAEKMLEVLEKSKK</sequence>
<keyword id="KW-0238">DNA-binding</keyword>
<keyword id="KW-0489">Methyltransferase</keyword>
<keyword id="KW-0680">Restriction system</keyword>
<keyword id="KW-0949">S-adenosyl-L-methionine</keyword>
<keyword id="KW-0804">Transcription</keyword>
<keyword id="KW-0805">Transcription regulation</keyword>
<keyword id="KW-0808">Transferase</keyword>
<proteinExistence type="inferred from homology"/>
<feature type="chain" id="PRO_0000087892" description="Type II methyltransferase M1.ScrFI">
    <location>
        <begin position="1"/>
        <end position="389"/>
    </location>
</feature>
<feature type="domain" description="HTH cro/C1-type" evidence="1">
    <location>
        <begin position="16"/>
        <end position="71"/>
    </location>
</feature>
<feature type="domain" description="SAM-dependent MTase C5-type" evidence="2">
    <location>
        <begin position="79"/>
        <end position="387"/>
    </location>
</feature>
<feature type="active site" evidence="2 3">
    <location>
        <position position="149"/>
    </location>
</feature>
<name>MTSA_LACLC</name>
<protein>
    <recommendedName>
        <fullName evidence="5">Type II methyltransferase M1.ScrFI</fullName>
        <shortName evidence="5">M1.ScrFI</shortName>
        <ecNumber>2.1.1.37</ecNumber>
    </recommendedName>
    <alternativeName>
        <fullName>Cytosine-specific methyltransferase ScrFIA</fullName>
    </alternativeName>
    <alternativeName>
        <fullName>Modification methylase ScrFIA</fullName>
        <shortName>M.ScrFI-A</shortName>
        <shortName>M.ScrFIA</shortName>
    </alternativeName>
</protein>
<comment type="function">
    <text evidence="4 5">A methylase, recognizes the double-stranded sequence 5'-CCNGG-3', methylates C-2 on both strands, and protects the DNA from cleavage by the ScrFI endonuclease.</text>
</comment>
<comment type="catalytic activity">
    <reaction evidence="3">
        <text>a 2'-deoxycytidine in DNA + S-adenosyl-L-methionine = a 5-methyl-2'-deoxycytidine in DNA + S-adenosyl-L-homocysteine + H(+)</text>
        <dbReference type="Rhea" id="RHEA:13681"/>
        <dbReference type="Rhea" id="RHEA-COMP:11369"/>
        <dbReference type="Rhea" id="RHEA-COMP:11370"/>
        <dbReference type="ChEBI" id="CHEBI:15378"/>
        <dbReference type="ChEBI" id="CHEBI:57856"/>
        <dbReference type="ChEBI" id="CHEBI:59789"/>
        <dbReference type="ChEBI" id="CHEBI:85452"/>
        <dbReference type="ChEBI" id="CHEBI:85454"/>
        <dbReference type="EC" id="2.1.1.37"/>
    </reaction>
</comment>
<comment type="miscellaneous">
    <text evidence="4">The ScrFI restriction system has two different methylases.</text>
</comment>
<comment type="similarity">
    <text evidence="2">Belongs to the class I-like SAM-binding methyltransferase superfamily. C5-methyltransferase family.</text>
</comment>
<gene>
    <name type="primary">scrFIAM</name>
</gene>
<dbReference type="EC" id="2.1.1.37"/>
<dbReference type="EMBL" id="M87289">
    <property type="protein sequence ID" value="AAA25220.1"/>
    <property type="molecule type" value="Genomic_DNA"/>
</dbReference>
<dbReference type="EMBL" id="U89998">
    <property type="protein sequence ID" value="AAB66696.1"/>
    <property type="molecule type" value="Genomic_DNA"/>
</dbReference>
<dbReference type="PIR" id="A48966">
    <property type="entry name" value="A48966"/>
</dbReference>
<dbReference type="SMR" id="P34877"/>
<dbReference type="REBASE" id="3681">
    <property type="entry name" value="M1.ScrFI"/>
</dbReference>
<dbReference type="PRO" id="PR:P34877"/>
<dbReference type="GO" id="GO:0003886">
    <property type="term" value="F:DNA (cytosine-5-)-methyltransferase activity"/>
    <property type="evidence" value="ECO:0007669"/>
    <property type="project" value="UniProtKB-EC"/>
</dbReference>
<dbReference type="GO" id="GO:0003677">
    <property type="term" value="F:DNA binding"/>
    <property type="evidence" value="ECO:0007669"/>
    <property type="project" value="UniProtKB-KW"/>
</dbReference>
<dbReference type="GO" id="GO:0009307">
    <property type="term" value="P:DNA restriction-modification system"/>
    <property type="evidence" value="ECO:0007669"/>
    <property type="project" value="UniProtKB-KW"/>
</dbReference>
<dbReference type="GO" id="GO:0032259">
    <property type="term" value="P:methylation"/>
    <property type="evidence" value="ECO:0007669"/>
    <property type="project" value="UniProtKB-KW"/>
</dbReference>
<dbReference type="CDD" id="cd00315">
    <property type="entry name" value="Cyt_C5_DNA_methylase"/>
    <property type="match status" value="1"/>
</dbReference>
<dbReference type="CDD" id="cd00093">
    <property type="entry name" value="HTH_XRE"/>
    <property type="match status" value="1"/>
</dbReference>
<dbReference type="Gene3D" id="3.90.120.30">
    <property type="match status" value="1"/>
</dbReference>
<dbReference type="Gene3D" id="1.10.260.40">
    <property type="entry name" value="lambda repressor-like DNA-binding domains"/>
    <property type="match status" value="1"/>
</dbReference>
<dbReference type="Gene3D" id="3.40.50.150">
    <property type="entry name" value="Vaccinia Virus protein VP39"/>
    <property type="match status" value="1"/>
</dbReference>
<dbReference type="InterPro" id="IPR050750">
    <property type="entry name" value="C5-MTase"/>
</dbReference>
<dbReference type="InterPro" id="IPR018117">
    <property type="entry name" value="C5_DNA_meth_AS"/>
</dbReference>
<dbReference type="InterPro" id="IPR001525">
    <property type="entry name" value="C5_MeTfrase"/>
</dbReference>
<dbReference type="InterPro" id="IPR031303">
    <property type="entry name" value="C5_meth_CS"/>
</dbReference>
<dbReference type="InterPro" id="IPR001387">
    <property type="entry name" value="Cro/C1-type_HTH"/>
</dbReference>
<dbReference type="InterPro" id="IPR010982">
    <property type="entry name" value="Lambda_DNA-bd_dom_sf"/>
</dbReference>
<dbReference type="InterPro" id="IPR029063">
    <property type="entry name" value="SAM-dependent_MTases_sf"/>
</dbReference>
<dbReference type="NCBIfam" id="TIGR00675">
    <property type="entry name" value="dcm"/>
    <property type="match status" value="1"/>
</dbReference>
<dbReference type="PANTHER" id="PTHR46098">
    <property type="entry name" value="TRNA (CYTOSINE(38)-C(5))-METHYLTRANSFERASE"/>
    <property type="match status" value="1"/>
</dbReference>
<dbReference type="PANTHER" id="PTHR46098:SF1">
    <property type="entry name" value="TRNA (CYTOSINE(38)-C(5))-METHYLTRANSFERASE"/>
    <property type="match status" value="1"/>
</dbReference>
<dbReference type="Pfam" id="PF00145">
    <property type="entry name" value="DNA_methylase"/>
    <property type="match status" value="1"/>
</dbReference>
<dbReference type="Pfam" id="PF01381">
    <property type="entry name" value="HTH_3"/>
    <property type="match status" value="1"/>
</dbReference>
<dbReference type="PRINTS" id="PR00105">
    <property type="entry name" value="C5METTRFRASE"/>
</dbReference>
<dbReference type="SMART" id="SM00530">
    <property type="entry name" value="HTH_XRE"/>
    <property type="match status" value="1"/>
</dbReference>
<dbReference type="SUPFAM" id="SSF47413">
    <property type="entry name" value="lambda repressor-like DNA-binding domains"/>
    <property type="match status" value="1"/>
</dbReference>
<dbReference type="SUPFAM" id="SSF53335">
    <property type="entry name" value="S-adenosyl-L-methionine-dependent methyltransferases"/>
    <property type="match status" value="1"/>
</dbReference>
<dbReference type="PROSITE" id="PS00094">
    <property type="entry name" value="C5_MTASE_1"/>
    <property type="match status" value="1"/>
</dbReference>
<dbReference type="PROSITE" id="PS00095">
    <property type="entry name" value="C5_MTASE_2"/>
    <property type="match status" value="1"/>
</dbReference>
<dbReference type="PROSITE" id="PS50943">
    <property type="entry name" value="HTH_CROC1"/>
    <property type="match status" value="1"/>
</dbReference>
<dbReference type="PROSITE" id="PS51679">
    <property type="entry name" value="SAM_MT_C5"/>
    <property type="match status" value="1"/>
</dbReference>
<reference key="1">
    <citation type="journal article" date="1993" name="Appl. Environ. Microbiol.">
        <title>ScrFI restriction-modification system of Lactococcus lactis subsp. cremoris UC503: cloning and characterization of two ScrFI methylase genes.</title>
        <authorList>
            <person name="Davis R."/>
            <person name="van der Lelie D."/>
            <person name="Mercenier A."/>
            <person name="Daly C."/>
            <person name="Fitzgerald G.F."/>
        </authorList>
    </citation>
    <scope>NUCLEOTIDE SEQUENCE [GENOMIC DNA]</scope>
    <scope>FUNCTION</scope>
    <source>
        <strain>UC503</strain>
    </source>
</reference>
<reference key="2">
    <citation type="journal article" date="2003" name="Nucleic Acids Res.">
        <title>A nomenclature for restriction enzymes, DNA methyltransferases, homing endonucleases and their genes.</title>
        <authorList>
            <person name="Roberts R.J."/>
            <person name="Belfort M."/>
            <person name="Bestor T."/>
            <person name="Bhagwat A.S."/>
            <person name="Bickle T.A."/>
            <person name="Bitinaite J."/>
            <person name="Blumenthal R.M."/>
            <person name="Degtyarev S.K."/>
            <person name="Dryden D.T."/>
            <person name="Dybvig K."/>
            <person name="Firman K."/>
            <person name="Gromova E.S."/>
            <person name="Gumport R.I."/>
            <person name="Halford S.E."/>
            <person name="Hattman S."/>
            <person name="Heitman J."/>
            <person name="Hornby D.P."/>
            <person name="Janulaitis A."/>
            <person name="Jeltsch A."/>
            <person name="Josephsen J."/>
            <person name="Kiss A."/>
            <person name="Klaenhammer T.R."/>
            <person name="Kobayashi I."/>
            <person name="Kong H."/>
            <person name="Krueger D.H."/>
            <person name="Lacks S."/>
            <person name="Marinus M.G."/>
            <person name="Miyahara M."/>
            <person name="Morgan R.D."/>
            <person name="Murray N.E."/>
            <person name="Nagaraja V."/>
            <person name="Piekarowicz A."/>
            <person name="Pingoud A."/>
            <person name="Raleigh E."/>
            <person name="Rao D.N."/>
            <person name="Reich N."/>
            <person name="Repin V.E."/>
            <person name="Selker E.U."/>
            <person name="Shaw P.C."/>
            <person name="Stein D.C."/>
            <person name="Stoddard B.L."/>
            <person name="Szybalski W."/>
            <person name="Trautner T.A."/>
            <person name="Van Etten J.L."/>
            <person name="Vitor J.M."/>
            <person name="Wilson G.G."/>
            <person name="Xu S.Y."/>
        </authorList>
    </citation>
    <scope>NOMENCLATURE</scope>
</reference>
<organism>
    <name type="scientific">Lactococcus lactis subsp. cremoris</name>
    <name type="common">Streptococcus cremoris</name>
    <dbReference type="NCBI Taxonomy" id="1359"/>
    <lineage>
        <taxon>Bacteria</taxon>
        <taxon>Bacillati</taxon>
        <taxon>Bacillota</taxon>
        <taxon>Bacilli</taxon>
        <taxon>Lactobacillales</taxon>
        <taxon>Streptococcaceae</taxon>
        <taxon>Lactococcus</taxon>
    </lineage>
</organism>
<accession>P34877</accession>
<evidence type="ECO:0000255" key="1">
    <source>
        <dbReference type="PROSITE-ProRule" id="PRU00257"/>
    </source>
</evidence>
<evidence type="ECO:0000255" key="2">
    <source>
        <dbReference type="PROSITE-ProRule" id="PRU01016"/>
    </source>
</evidence>
<evidence type="ECO:0000255" key="3">
    <source>
        <dbReference type="PROSITE-ProRule" id="PRU10018"/>
    </source>
</evidence>
<evidence type="ECO:0000269" key="4">
    <source>
    </source>
</evidence>
<evidence type="ECO:0000303" key="5">
    <source>
    </source>
</evidence>